<protein>
    <recommendedName>
        <fullName>Interaptin</fullName>
    </recommendedName>
    <alternativeName>
        <fullName>Actin-binding protein D</fullName>
    </alternativeName>
    <alternativeName>
        <fullName>Alpha-actinin B</fullName>
    </alternativeName>
</protein>
<sequence length="1738" mass="204427">MEHSTPLNEEIVHKKNDENWVIAQKKVFTNWCNIFLNQRSQKIEDLETDLYDGILLGSLLEILSGKNVILSKCKQLKTRLHYINNLNFSLKFIGDEGLRLVGVASEDITDGNLKLILGLVWTLILRYQIQSMQNSKSSQQNLHSSTKPSELMLNWVKSQISDYGHHIKDLTTSFQNGLLFCALVHKLVPEKLDYKSLSESDSLGNLTLAFEVANKELGIPSILDPHDIITTPDELSILTYISLFPKVYQQTLEPLNNNNNISPSLSSSSSSLLNTPNKRNSIQLSKSTSFEQQNQQQQQQNLLSPNSYRNSISFSKSPSFEGSQSTGSSRSISPISSPIKNSTTGNSNLSKSTSFEKIEASNTTNNNTIIIAEESRVIEKIVEKIIEVEKIVEVEKIVEVEKIVEVEKIVEVEKIVKVDDIEKLTNLQDQLTEQQQQYQEKSLKLVNLELELQEKSNQLVDKSNQLSTMQATNSELMEKIGGLMNDLTDIPTQDIKEKDEIIANLKIESEKNLKCFQDDFNALQSRYSLTIEQTSQLQDRIKQLINELQERDDKFIEFTNSSNQSLADNQRVIDQLTNEKQSITLQLQDQQDIKEKEFQFEKQQLLSQIDSITTNIQEYQDKFNNLQQEFNTQQTLNQQETHRLTQQLYQINTDYNEKQTQLQSEIKDNQTINEQLNKQLSEKDKEIEKLSNQQEQQQDEKINNLLLEIKEKDCLIERINQQLLENIDLNSKYQQLLLEFENFKLNSSKEKENQLNELQSKQDERFNQLNDEKLEKEKQLQSIEDEFNQYKQQQLSSNSNIDQQLQSTIIELSELKEQKELNDSKLIEKEKQLQQLQQEFDQLNEKNQKDHQDQLELLEKQLKQLQQEYDQLNETNQSIENQLNQQNLINKENLNEKEQELLKLQNQLNQQIEKIQFDQQEFSKQNSINIELVNEKNEKLIQLQQDYDQLKQQNRSNDEKDENDLIEKENQLKSIQNELNQLIEKNESDHKEQQLKQQSIENDLIEKENQIQQLQSQLNEQRQQQSNQLSEKDQQLNQLIEKNQFDQKEQQLKQQSIENDLFEKENQIQQLQSQLNEQRQQQSNQLSEKDQQLNQLIEKNESDQKEQQLKQQSIENDLIEKENQIQQLQLQLNEQRQLQSEVSIDNDKILELEKQLKQCQSDLLKLNDEKQQQDKQLQDKQIEFDQLQLTFNQFKNDKDSQFIQLQDDQKQQLQSIQQDLNQLKQENQEKEKQLSEKDEKLQSIQFENQEKEKQLSEKDEKLQSIQQNLNQLNDENQEKVKQFSEKDEKLQSIQQDLNQLKQENQEKEKQLSEKDEKLQSIQQDLNQLNDDQIKKNEKLKEKEEQLLKLQQDFNDQQSQQLKQLEEKLSEKENQLQQLKQENEINQLNQQQQSNEIIQQLKDQLLKQQQQEQQENNNEKEIERLIQEIEQLKQQQEIDQSELSNKEIKIQTTQQEFDQLSHNRSKDQLHLQQLQQELDQLKQSFDDQDHQFKKVIDERYNLQLQLEQSTLSNNQLDQLLKEKLKPLELDSNEKQKTIDDLLSNISNLQISLQNDKDLISERNNSIKTLESRITQQLSLLDEKDNLIKDLQQQKQQQQQPPTASSSPSSSPSLLSSTPTPKPQRPNQIEIDRLVNEIVNRNQDLIRKNKTKFYKLENGDYIVNSIIYRLSLDDDNDSDLIAQEYENGNSTTFEKSLRIFPSKNTRPIFDWRALFFIGAAVLAISTLFSSSRPIKYEKPT</sequence>
<evidence type="ECO:0000255" key="1"/>
<evidence type="ECO:0000255" key="2">
    <source>
        <dbReference type="PROSITE-ProRule" id="PRU00044"/>
    </source>
</evidence>
<evidence type="ECO:0000256" key="3">
    <source>
        <dbReference type="SAM" id="MobiDB-lite"/>
    </source>
</evidence>
<evidence type="ECO:0000269" key="4">
    <source>
    </source>
</evidence>
<evidence type="ECO:0000269" key="5">
    <source>
    </source>
</evidence>
<evidence type="ECO:0000305" key="6"/>
<proteinExistence type="evidence at protein level"/>
<keyword id="KW-0009">Actin-binding</keyword>
<keyword id="KW-0175">Coiled coil</keyword>
<keyword id="KW-0963">Cytoplasm</keyword>
<keyword id="KW-0206">Cytoskeleton</keyword>
<keyword id="KW-0217">Developmental protein</keyword>
<keyword id="KW-0256">Endoplasmic reticulum</keyword>
<keyword id="KW-0333">Golgi apparatus</keyword>
<keyword id="KW-0472">Membrane</keyword>
<keyword id="KW-0539">Nucleus</keyword>
<keyword id="KW-1185">Reference proteome</keyword>
<keyword id="KW-0677">Repeat</keyword>
<keyword id="KW-0812">Transmembrane</keyword>
<keyword id="KW-1133">Transmembrane helix</keyword>
<reference key="1">
    <citation type="journal article" date="1998" name="J. Cell Biol.">
        <title>Interaptin, an actin-binding protein of the alpha-actinin superfamily in Dictyostelium discoideum, is developmentally and cAMP-regulated and associates with intracellular membrane compartments.</title>
        <authorList>
            <person name="Rivero F."/>
            <person name="Kuspa A."/>
            <person name="Brokamp R."/>
            <person name="Matzner M."/>
            <person name="Noegel A.A."/>
        </authorList>
    </citation>
    <scope>NUCLEOTIDE SEQUENCE [GENOMIC DNA]</scope>
    <scope>DEVELOPMENTAL STAGE</scope>
    <scope>INDUCTION</scope>
    <scope>SUBCELLULAR LOCATION</scope>
</reference>
<reference key="2">
    <citation type="journal article" date="2005" name="Nature">
        <title>The genome of the social amoeba Dictyostelium discoideum.</title>
        <authorList>
            <person name="Eichinger L."/>
            <person name="Pachebat J.A."/>
            <person name="Gloeckner G."/>
            <person name="Rajandream M.A."/>
            <person name="Sucgang R."/>
            <person name="Berriman M."/>
            <person name="Song J."/>
            <person name="Olsen R."/>
            <person name="Szafranski K."/>
            <person name="Xu Q."/>
            <person name="Tunggal B."/>
            <person name="Kummerfeld S."/>
            <person name="Madera M."/>
            <person name="Konfortov B.A."/>
            <person name="Rivero F."/>
            <person name="Bankier A.T."/>
            <person name="Lehmann R."/>
            <person name="Hamlin N."/>
            <person name="Davies R."/>
            <person name="Gaudet P."/>
            <person name="Fey P."/>
            <person name="Pilcher K."/>
            <person name="Chen G."/>
            <person name="Saunders D."/>
            <person name="Sodergren E.J."/>
            <person name="Davis P."/>
            <person name="Kerhornou A."/>
            <person name="Nie X."/>
            <person name="Hall N."/>
            <person name="Anjard C."/>
            <person name="Hemphill L."/>
            <person name="Bason N."/>
            <person name="Farbrother P."/>
            <person name="Desany B."/>
            <person name="Just E."/>
            <person name="Morio T."/>
            <person name="Rost R."/>
            <person name="Churcher C.M."/>
            <person name="Cooper J."/>
            <person name="Haydock S."/>
            <person name="van Driessche N."/>
            <person name="Cronin A."/>
            <person name="Goodhead I."/>
            <person name="Muzny D.M."/>
            <person name="Mourier T."/>
            <person name="Pain A."/>
            <person name="Lu M."/>
            <person name="Harper D."/>
            <person name="Lindsay R."/>
            <person name="Hauser H."/>
            <person name="James K.D."/>
            <person name="Quiles M."/>
            <person name="Madan Babu M."/>
            <person name="Saito T."/>
            <person name="Buchrieser C."/>
            <person name="Wardroper A."/>
            <person name="Felder M."/>
            <person name="Thangavelu M."/>
            <person name="Johnson D."/>
            <person name="Knights A."/>
            <person name="Loulseged H."/>
            <person name="Mungall K.L."/>
            <person name="Oliver K."/>
            <person name="Price C."/>
            <person name="Quail M.A."/>
            <person name="Urushihara H."/>
            <person name="Hernandez J."/>
            <person name="Rabbinowitsch E."/>
            <person name="Steffen D."/>
            <person name="Sanders M."/>
            <person name="Ma J."/>
            <person name="Kohara Y."/>
            <person name="Sharp S."/>
            <person name="Simmonds M.N."/>
            <person name="Spiegler S."/>
            <person name="Tivey A."/>
            <person name="Sugano S."/>
            <person name="White B."/>
            <person name="Walker D."/>
            <person name="Woodward J.R."/>
            <person name="Winckler T."/>
            <person name="Tanaka Y."/>
            <person name="Shaulsky G."/>
            <person name="Schleicher M."/>
            <person name="Weinstock G.M."/>
            <person name="Rosenthal A."/>
            <person name="Cox E.C."/>
            <person name="Chisholm R.L."/>
            <person name="Gibbs R.A."/>
            <person name="Loomis W.F."/>
            <person name="Platzer M."/>
            <person name="Kay R.R."/>
            <person name="Williams J.G."/>
            <person name="Dear P.H."/>
            <person name="Noegel A.A."/>
            <person name="Barrell B.G."/>
            <person name="Kuspa A."/>
        </authorList>
    </citation>
    <scope>NUCLEOTIDE SEQUENCE [LARGE SCALE GENOMIC DNA]</scope>
    <source>
        <strain>AX4</strain>
    </source>
</reference>
<reference key="3">
    <citation type="journal article" date="2000" name="Mech. Dev.">
        <title>Severe developmental defects in Dictyostelium null mutants for actin-binding proteins.</title>
        <authorList>
            <person name="Ponte E."/>
            <person name="Rivero F."/>
            <person name="Fechheimer M."/>
            <person name="Noegel A."/>
            <person name="Bozzaro S."/>
        </authorList>
    </citation>
    <scope>FUNCTION</scope>
    <scope>DISRUPTION PHENOTYPE</scope>
</reference>
<reference key="4">
    <citation type="journal article" date="2006" name="J. Proteome Res.">
        <title>Identification of novel centrosomal proteins in Dictyostelium discoideum by comparative proteomic approaches.</title>
        <authorList>
            <person name="Reinders Y."/>
            <person name="Schulz I."/>
            <person name="Graef R."/>
            <person name="Sickmann A."/>
        </authorList>
    </citation>
    <scope>IDENTIFICATION BY MASS SPECTROMETRY [LARGE SCALE ANALYSIS]</scope>
</reference>
<reference key="5">
    <citation type="journal article" date="2008" name="Traffic">
        <title>Dictyostelium Sun-1 connects the centrosome to chromatin and ensures genome stability.</title>
        <authorList>
            <person name="Xiong H."/>
            <person name="Rivero F."/>
            <person name="Euteneuer U."/>
            <person name="Mondal S."/>
            <person name="Mana-Capelli S."/>
            <person name="Larochelle D."/>
            <person name="Vogel A."/>
            <person name="Gassen B."/>
            <person name="Noegel A.A."/>
        </authorList>
    </citation>
    <scope>SUBCELLULAR LOCATION</scope>
</reference>
<gene>
    <name type="primary">abpD</name>
    <name type="synonym">actnB</name>
    <name type="ORF">DDB_G0287291</name>
</gene>
<name>ACTNB_DICDI</name>
<dbReference type="EMBL" id="AF057019">
    <property type="protein sequence ID" value="AAC34582.1"/>
    <property type="molecule type" value="Genomic_DNA"/>
</dbReference>
<dbReference type="EMBL" id="AAFI02000100">
    <property type="protein sequence ID" value="EAL63713.1"/>
    <property type="molecule type" value="Genomic_DNA"/>
</dbReference>
<dbReference type="PIR" id="T14867">
    <property type="entry name" value="T14867"/>
</dbReference>
<dbReference type="RefSeq" id="XP_637275.1">
    <property type="nucleotide sequence ID" value="XM_632183.1"/>
</dbReference>
<dbReference type="SMR" id="O76329"/>
<dbReference type="IntAct" id="O76329">
    <property type="interactions" value="65"/>
</dbReference>
<dbReference type="STRING" id="44689.O76329"/>
<dbReference type="TCDB" id="1.I.1.1.5">
    <property type="family name" value="the nuclear pore complex (npc) family"/>
</dbReference>
<dbReference type="PaxDb" id="44689-DDB0191136"/>
<dbReference type="EnsemblProtists" id="EAL63713">
    <property type="protein sequence ID" value="EAL63713"/>
    <property type="gene ID" value="DDB_G0287291"/>
</dbReference>
<dbReference type="GeneID" id="8626106"/>
<dbReference type="KEGG" id="ddi:DDB_G0287291"/>
<dbReference type="dictyBase" id="DDB_G0287291">
    <property type="gene designation" value="abpD"/>
</dbReference>
<dbReference type="VEuPathDB" id="AmoebaDB:DDB_G0287291"/>
<dbReference type="eggNOG" id="KOG0035">
    <property type="taxonomic scope" value="Eukaryota"/>
</dbReference>
<dbReference type="HOGENOM" id="CLU_239777_0_0_1"/>
<dbReference type="InParanoid" id="O76329"/>
<dbReference type="OMA" id="KFECAVQ"/>
<dbReference type="Reactome" id="R-DDI-114608">
    <property type="pathway name" value="Platelet degranulation"/>
</dbReference>
<dbReference type="Reactome" id="R-DDI-6798695">
    <property type="pathway name" value="Neutrophil degranulation"/>
</dbReference>
<dbReference type="Reactome" id="R-DDI-6807878">
    <property type="pathway name" value="COPI-mediated anterograde transport"/>
</dbReference>
<dbReference type="Reactome" id="R-DDI-9013418">
    <property type="pathway name" value="RHOBTB2 GTPase cycle"/>
</dbReference>
<dbReference type="Reactome" id="R-DDI-9013420">
    <property type="pathway name" value="RHOU GTPase cycle"/>
</dbReference>
<dbReference type="Reactome" id="R-DDI-9013424">
    <property type="pathway name" value="RHOV GTPase cycle"/>
</dbReference>
<dbReference type="PRO" id="PR:O76329"/>
<dbReference type="Proteomes" id="UP000002195">
    <property type="component" value="Chromosome 5"/>
</dbReference>
<dbReference type="GO" id="GO:0042995">
    <property type="term" value="C:cell projection"/>
    <property type="evidence" value="ECO:0000318"/>
    <property type="project" value="GO_Central"/>
</dbReference>
<dbReference type="GO" id="GO:0005813">
    <property type="term" value="C:centrosome"/>
    <property type="evidence" value="ECO:0007669"/>
    <property type="project" value="UniProtKB-SubCell"/>
</dbReference>
<dbReference type="GO" id="GO:0030864">
    <property type="term" value="C:cortical actin cytoskeleton"/>
    <property type="evidence" value="ECO:0000318"/>
    <property type="project" value="GO_Central"/>
</dbReference>
<dbReference type="GO" id="GO:0005789">
    <property type="term" value="C:endoplasmic reticulum membrane"/>
    <property type="evidence" value="ECO:0000314"/>
    <property type="project" value="dictyBase"/>
</dbReference>
<dbReference type="GO" id="GO:0032580">
    <property type="term" value="C:Golgi cisterna membrane"/>
    <property type="evidence" value="ECO:0007669"/>
    <property type="project" value="UniProtKB-SubCell"/>
</dbReference>
<dbReference type="GO" id="GO:0005635">
    <property type="term" value="C:nuclear envelope"/>
    <property type="evidence" value="ECO:0000314"/>
    <property type="project" value="dictyBase"/>
</dbReference>
<dbReference type="GO" id="GO:0031965">
    <property type="term" value="C:nuclear membrane"/>
    <property type="evidence" value="ECO:0007669"/>
    <property type="project" value="UniProtKB-SubCell"/>
</dbReference>
<dbReference type="GO" id="GO:0042175">
    <property type="term" value="C:nuclear outer membrane-endoplasmic reticulum membrane network"/>
    <property type="evidence" value="ECO:0000314"/>
    <property type="project" value="dictyBase"/>
</dbReference>
<dbReference type="GO" id="GO:0003779">
    <property type="term" value="F:actin binding"/>
    <property type="evidence" value="ECO:0000250"/>
    <property type="project" value="dictyBase"/>
</dbReference>
<dbReference type="GO" id="GO:0051015">
    <property type="term" value="F:actin filament binding"/>
    <property type="evidence" value="ECO:0000318"/>
    <property type="project" value="GO_Central"/>
</dbReference>
<dbReference type="GO" id="GO:0030036">
    <property type="term" value="P:actin cytoskeleton organization"/>
    <property type="evidence" value="ECO:0000318"/>
    <property type="project" value="GO_Central"/>
</dbReference>
<dbReference type="GO" id="GO:0098609">
    <property type="term" value="P:cell-cell adhesion"/>
    <property type="evidence" value="ECO:0000315"/>
    <property type="project" value="dictyBase"/>
</dbReference>
<dbReference type="GO" id="GO:0030587">
    <property type="term" value="P:sorocarp development"/>
    <property type="evidence" value="ECO:0000315"/>
    <property type="project" value="dictyBase"/>
</dbReference>
<dbReference type="GO" id="GO:0009847">
    <property type="term" value="P:spore germination"/>
    <property type="evidence" value="ECO:0000315"/>
    <property type="project" value="dictyBase"/>
</dbReference>
<dbReference type="FunFam" id="1.10.418.10:FF:000099">
    <property type="entry name" value="Nuclear anchorage protein 1"/>
    <property type="match status" value="1"/>
</dbReference>
<dbReference type="Gene3D" id="1.10.418.10">
    <property type="entry name" value="Calponin-like domain"/>
    <property type="match status" value="2"/>
</dbReference>
<dbReference type="InterPro" id="IPR001589">
    <property type="entry name" value="Actinin_actin-bd_CS"/>
</dbReference>
<dbReference type="InterPro" id="IPR001715">
    <property type="entry name" value="CH_dom"/>
</dbReference>
<dbReference type="InterPro" id="IPR036872">
    <property type="entry name" value="CH_dom_sf"/>
</dbReference>
<dbReference type="PANTHER" id="PTHR11915">
    <property type="entry name" value="SPECTRIN/FILAMIN RELATED CYTOSKELETAL PROTEIN"/>
    <property type="match status" value="1"/>
</dbReference>
<dbReference type="Pfam" id="PF00307">
    <property type="entry name" value="CH"/>
    <property type="match status" value="2"/>
</dbReference>
<dbReference type="SMART" id="SM00033">
    <property type="entry name" value="CH"/>
    <property type="match status" value="2"/>
</dbReference>
<dbReference type="SUPFAM" id="SSF47576">
    <property type="entry name" value="Calponin-homology domain, CH-domain"/>
    <property type="match status" value="1"/>
</dbReference>
<dbReference type="PROSITE" id="PS00019">
    <property type="entry name" value="ACTININ_1"/>
    <property type="match status" value="1"/>
</dbReference>
<dbReference type="PROSITE" id="PS00020">
    <property type="entry name" value="ACTININ_2"/>
    <property type="match status" value="1"/>
</dbReference>
<dbReference type="PROSITE" id="PS50021">
    <property type="entry name" value="CH"/>
    <property type="match status" value="2"/>
</dbReference>
<accession>O76329</accession>
<accession>Q54KE8</accession>
<feature type="chain" id="PRO_0000327607" description="Interaptin">
    <location>
        <begin position="1"/>
        <end position="1738"/>
    </location>
</feature>
<feature type="topological domain" description="Cytoplasmic" evidence="1">
    <location>
        <begin position="1"/>
        <end position="1705"/>
    </location>
</feature>
<feature type="transmembrane region" description="Helical; Anchor for type IV membrane protein">
    <location>
        <begin position="1706"/>
        <end position="1726"/>
    </location>
</feature>
<feature type="domain" description="Calponin-homology (CH) 1" evidence="2">
    <location>
        <begin position="22"/>
        <end position="128"/>
    </location>
</feature>
<feature type="domain" description="Calponin-homology (CH) 2" evidence="2">
    <location>
        <begin position="146"/>
        <end position="249"/>
    </location>
</feature>
<feature type="region of interest" description="Actin-binding">
    <location>
        <begin position="1"/>
        <end position="248"/>
    </location>
</feature>
<feature type="region of interest" description="Disordered" evidence="3">
    <location>
        <begin position="285"/>
        <end position="350"/>
    </location>
</feature>
<feature type="region of interest" description="Disordered" evidence="3">
    <location>
        <begin position="1068"/>
        <end position="1090"/>
    </location>
</feature>
<feature type="region of interest" description="Disordered" evidence="3">
    <location>
        <begin position="1589"/>
        <end position="1627"/>
    </location>
</feature>
<feature type="coiled-coil region" evidence="1">
    <location>
        <begin position="373"/>
        <end position="1598"/>
    </location>
</feature>
<feature type="compositionally biased region" description="Low complexity" evidence="3">
    <location>
        <begin position="292"/>
        <end position="301"/>
    </location>
</feature>
<feature type="compositionally biased region" description="Polar residues" evidence="3">
    <location>
        <begin position="302"/>
        <end position="316"/>
    </location>
</feature>
<feature type="compositionally biased region" description="Low complexity" evidence="3">
    <location>
        <begin position="317"/>
        <end position="344"/>
    </location>
</feature>
<feature type="compositionally biased region" description="Low complexity" evidence="3">
    <location>
        <begin position="1068"/>
        <end position="1086"/>
    </location>
</feature>
<feature type="compositionally biased region" description="Low complexity" evidence="3">
    <location>
        <begin position="1589"/>
        <end position="1617"/>
    </location>
</feature>
<organism>
    <name type="scientific">Dictyostelium discoideum</name>
    <name type="common">Social amoeba</name>
    <dbReference type="NCBI Taxonomy" id="44689"/>
    <lineage>
        <taxon>Eukaryota</taxon>
        <taxon>Amoebozoa</taxon>
        <taxon>Evosea</taxon>
        <taxon>Eumycetozoa</taxon>
        <taxon>Dictyostelia</taxon>
        <taxon>Dictyosteliales</taxon>
        <taxon>Dictyosteliaceae</taxon>
        <taxon>Dictyostelium</taxon>
    </lineage>
</organism>
<comment type="function">
    <text evidence="4">May function as linker between cellular membranes and the actin cytoskeleton. Required for normal development of fruiting bodies.</text>
</comment>
<comment type="subcellular location">
    <subcellularLocation>
        <location>Nucleus membrane</location>
        <topology>Single-pass type IV membrane protein</topology>
        <orientation>Cytoplasmic side</orientation>
    </subcellularLocation>
    <subcellularLocation>
        <location>Endoplasmic reticulum membrane</location>
    </subcellularLocation>
    <subcellularLocation>
        <location>Golgi apparatus</location>
        <location>Golgi stack membrane</location>
    </subcellularLocation>
    <subcellularLocation>
        <location>Cytoplasm</location>
        <location>Cytoskeleton</location>
        <location>Microtubule organizing center</location>
        <location>Centrosome</location>
    </subcellularLocation>
    <subcellularLocation>
        <location>Cytoplasm</location>
        <location>Cytoskeleton</location>
    </subcellularLocation>
    <text>The largest part of the protein is cytoplasmic, while its C-terminal part is associated either with the nuclear envelope, the Golgi membrane or the endoplasmic reticulum membrane.</text>
</comment>
<comment type="developmental stage">
    <text evidence="5">Present at very low levels during early stages of development. Levels increase during late aggregation stage, reach a maximum and remain high during culmination and maturation of the fruiting body. Detected in upper and lower cup structures in late culminants and mature fruiting bodies (at protein level). First detected after 12 hours of development. Highly expressed at 12 to 16 hours of development. Levels return to basal levels during maturation of the fruiting body.</text>
</comment>
<comment type="induction">
    <text evidence="5">Up-regulated by cAMP.</text>
</comment>
<comment type="disruption phenotype">
    <text evidence="4">Cells have reduced efficiency in fruiting body formation and reduced spore viability.</text>
</comment>
<comment type="similarity">
    <text evidence="6">Belongs to the alpha-actinin family.</text>
</comment>